<organism>
    <name type="scientific">Listeria innocua serovar 6a (strain ATCC BAA-680 / CLIP 11262)</name>
    <dbReference type="NCBI Taxonomy" id="272626"/>
    <lineage>
        <taxon>Bacteria</taxon>
        <taxon>Bacillati</taxon>
        <taxon>Bacillota</taxon>
        <taxon>Bacilli</taxon>
        <taxon>Bacillales</taxon>
        <taxon>Listeriaceae</taxon>
        <taxon>Listeria</taxon>
    </lineage>
</organism>
<name>MEND_LISIN</name>
<gene>
    <name evidence="1" type="primary">menD</name>
    <name type="ordered locus">lin1783</name>
</gene>
<accession>Q92AY5</accession>
<keyword id="KW-0460">Magnesium</keyword>
<keyword id="KW-0464">Manganese</keyword>
<keyword id="KW-0474">Menaquinone biosynthesis</keyword>
<keyword id="KW-0479">Metal-binding</keyword>
<keyword id="KW-0786">Thiamine pyrophosphate</keyword>
<keyword id="KW-0808">Transferase</keyword>
<dbReference type="EC" id="2.2.1.9" evidence="1"/>
<dbReference type="EMBL" id="AL596169">
    <property type="protein sequence ID" value="CAC97014.1"/>
    <property type="molecule type" value="Genomic_DNA"/>
</dbReference>
<dbReference type="PIR" id="AF1655">
    <property type="entry name" value="AF1655"/>
</dbReference>
<dbReference type="RefSeq" id="WP_003772171.1">
    <property type="nucleotide sequence ID" value="NC_003212.1"/>
</dbReference>
<dbReference type="SMR" id="Q92AY5"/>
<dbReference type="STRING" id="272626.gene:17566114"/>
<dbReference type="DNASU" id="1130450"/>
<dbReference type="GeneID" id="93235096"/>
<dbReference type="KEGG" id="lin:menD"/>
<dbReference type="eggNOG" id="COG1165">
    <property type="taxonomic scope" value="Bacteria"/>
</dbReference>
<dbReference type="HOGENOM" id="CLU_006051_3_0_9"/>
<dbReference type="OrthoDB" id="9791859at2"/>
<dbReference type="UniPathway" id="UPA00079"/>
<dbReference type="UniPathway" id="UPA01057">
    <property type="reaction ID" value="UER00164"/>
</dbReference>
<dbReference type="Proteomes" id="UP000002513">
    <property type="component" value="Chromosome"/>
</dbReference>
<dbReference type="GO" id="GO:0070204">
    <property type="term" value="F:2-succinyl-5-enolpyruvyl-6-hydroxy-3-cyclohexene-1-carboxylic-acid synthase activity"/>
    <property type="evidence" value="ECO:0007669"/>
    <property type="project" value="UniProtKB-UniRule"/>
</dbReference>
<dbReference type="GO" id="GO:0000287">
    <property type="term" value="F:magnesium ion binding"/>
    <property type="evidence" value="ECO:0007669"/>
    <property type="project" value="UniProtKB-UniRule"/>
</dbReference>
<dbReference type="GO" id="GO:0030145">
    <property type="term" value="F:manganese ion binding"/>
    <property type="evidence" value="ECO:0007669"/>
    <property type="project" value="UniProtKB-UniRule"/>
</dbReference>
<dbReference type="GO" id="GO:0030976">
    <property type="term" value="F:thiamine pyrophosphate binding"/>
    <property type="evidence" value="ECO:0007669"/>
    <property type="project" value="UniProtKB-UniRule"/>
</dbReference>
<dbReference type="GO" id="GO:0009234">
    <property type="term" value="P:menaquinone biosynthetic process"/>
    <property type="evidence" value="ECO:0007669"/>
    <property type="project" value="UniProtKB-UniRule"/>
</dbReference>
<dbReference type="CDD" id="cd07037">
    <property type="entry name" value="TPP_PYR_MenD"/>
    <property type="match status" value="1"/>
</dbReference>
<dbReference type="CDD" id="cd02009">
    <property type="entry name" value="TPP_SHCHC_synthase"/>
    <property type="match status" value="1"/>
</dbReference>
<dbReference type="Gene3D" id="3.40.50.970">
    <property type="match status" value="2"/>
</dbReference>
<dbReference type="Gene3D" id="3.40.50.1220">
    <property type="entry name" value="TPP-binding domain"/>
    <property type="match status" value="1"/>
</dbReference>
<dbReference type="HAMAP" id="MF_01659">
    <property type="entry name" value="MenD"/>
    <property type="match status" value="1"/>
</dbReference>
<dbReference type="InterPro" id="IPR029035">
    <property type="entry name" value="DHS-like_NAD/FAD-binding_dom"/>
</dbReference>
<dbReference type="InterPro" id="IPR004433">
    <property type="entry name" value="MenaQ_synth_MenD"/>
</dbReference>
<dbReference type="InterPro" id="IPR032264">
    <property type="entry name" value="MenD_middle"/>
</dbReference>
<dbReference type="InterPro" id="IPR029061">
    <property type="entry name" value="THDP-binding"/>
</dbReference>
<dbReference type="InterPro" id="IPR012001">
    <property type="entry name" value="Thiamin_PyroP_enz_TPP-bd_dom"/>
</dbReference>
<dbReference type="InterPro" id="IPR011766">
    <property type="entry name" value="TPP_enzyme_TPP-bd"/>
</dbReference>
<dbReference type="NCBIfam" id="TIGR00173">
    <property type="entry name" value="menD"/>
    <property type="match status" value="1"/>
</dbReference>
<dbReference type="PANTHER" id="PTHR42916">
    <property type="entry name" value="2-SUCCINYL-5-ENOLPYRUVYL-6-HYDROXY-3-CYCLOHEXENE-1-CARBOXYLATE SYNTHASE"/>
    <property type="match status" value="1"/>
</dbReference>
<dbReference type="PANTHER" id="PTHR42916:SF1">
    <property type="entry name" value="PROTEIN PHYLLO, CHLOROPLASTIC"/>
    <property type="match status" value="1"/>
</dbReference>
<dbReference type="Pfam" id="PF02775">
    <property type="entry name" value="TPP_enzyme_C"/>
    <property type="match status" value="1"/>
</dbReference>
<dbReference type="Pfam" id="PF16582">
    <property type="entry name" value="TPP_enzyme_M_2"/>
    <property type="match status" value="1"/>
</dbReference>
<dbReference type="Pfam" id="PF02776">
    <property type="entry name" value="TPP_enzyme_N"/>
    <property type="match status" value="1"/>
</dbReference>
<dbReference type="PIRSF" id="PIRSF004983">
    <property type="entry name" value="MenD"/>
    <property type="match status" value="1"/>
</dbReference>
<dbReference type="SUPFAM" id="SSF52467">
    <property type="entry name" value="DHS-like NAD/FAD-binding domain"/>
    <property type="match status" value="1"/>
</dbReference>
<dbReference type="SUPFAM" id="SSF52518">
    <property type="entry name" value="Thiamin diphosphate-binding fold (THDP-binding)"/>
    <property type="match status" value="2"/>
</dbReference>
<protein>
    <recommendedName>
        <fullName evidence="1">2-succinyl-5-enolpyruvyl-6-hydroxy-3-cyclohexene-1-carboxylate synthase</fullName>
        <shortName evidence="1">SEPHCHC synthase</shortName>
        <ecNumber evidence="1">2.2.1.9</ecNumber>
    </recommendedName>
    <alternativeName>
        <fullName evidence="1">Menaquinone biosynthesis protein MenD</fullName>
    </alternativeName>
</protein>
<feature type="chain" id="PRO_0000341767" description="2-succinyl-5-enolpyruvyl-6-hydroxy-3-cyclohexene-1-carboxylate synthase">
    <location>
        <begin position="1"/>
        <end position="580"/>
    </location>
</feature>
<proteinExistence type="inferred from homology"/>
<comment type="function">
    <text evidence="1">Catalyzes the thiamine diphosphate-dependent decarboxylation of 2-oxoglutarate and the subsequent addition of the resulting succinic semialdehyde-thiamine pyrophosphate anion to isochorismate to yield 2-succinyl-5-enolpyruvyl-6-hydroxy-3-cyclohexene-1-carboxylate (SEPHCHC).</text>
</comment>
<comment type="catalytic activity">
    <reaction evidence="1">
        <text>isochorismate + 2-oxoglutarate + H(+) = 5-enolpyruvoyl-6-hydroxy-2-succinyl-cyclohex-3-ene-1-carboxylate + CO2</text>
        <dbReference type="Rhea" id="RHEA:25593"/>
        <dbReference type="ChEBI" id="CHEBI:15378"/>
        <dbReference type="ChEBI" id="CHEBI:16526"/>
        <dbReference type="ChEBI" id="CHEBI:16810"/>
        <dbReference type="ChEBI" id="CHEBI:29780"/>
        <dbReference type="ChEBI" id="CHEBI:58818"/>
        <dbReference type="EC" id="2.2.1.9"/>
    </reaction>
</comment>
<comment type="cofactor">
    <cofactor evidence="1">
        <name>Mg(2+)</name>
        <dbReference type="ChEBI" id="CHEBI:18420"/>
    </cofactor>
    <cofactor evidence="1">
        <name>Mn(2+)</name>
        <dbReference type="ChEBI" id="CHEBI:29035"/>
    </cofactor>
</comment>
<comment type="cofactor">
    <cofactor evidence="1">
        <name>thiamine diphosphate</name>
        <dbReference type="ChEBI" id="CHEBI:58937"/>
    </cofactor>
    <text evidence="1">Binds 1 thiamine pyrophosphate per subunit.</text>
</comment>
<comment type="pathway">
    <text evidence="1">Quinol/quinone metabolism; 1,4-dihydroxy-2-naphthoate biosynthesis; 1,4-dihydroxy-2-naphthoate from chorismate: step 2/7.</text>
</comment>
<comment type="pathway">
    <text evidence="1">Quinol/quinone metabolism; menaquinone biosynthesis.</text>
</comment>
<comment type="subunit">
    <text evidence="1">Homodimer.</text>
</comment>
<comment type="similarity">
    <text evidence="1">Belongs to the TPP enzyme family. MenD subfamily.</text>
</comment>
<sequence>MTNHEQVLTDYLAAFIEELVQAGVKEAIISPGSRSTPLALMMAEHPTLKIYVDVDERSAGFFALGLAKASKRPVVLLCTSGTAAANYFPAVVEANLSQIPLIVLTADRPHELRNVGAPQAMDQLHLYGSHVKDFTDMALPENSDEMLRYAKWHSSRAVDIAMKTPRGPVHLNFPLREPLVPILEPSPFTATGKKHHHVHIYYTHEVLDDSSIQKMVTECTGKKGVFVVGPIDKKELEQPMVDLAKKLGWPILADPLSGLRSYGAMDEVVIDQYDAFLKEADILDKLTPEVVIRFGSMPVSKPLKNWLEHLFGIRFYVVDPGAAWKDPIKAVTDMIHCDERFLLDIMQQNMPDDTKDASWLNRWTSYNQKAREIVLEEMANTTTLEEGKIVSELRRLLPDKAGLFIGNSMPIRDVDTYFSQIDKKIKMLANRGANGIDGVVSSALGASVVFQPMFLLIGDLSFYHDMNGLLMAKKYKMNLTIIIVNNDGGGIFSFLPQANEPKYFESLFGTSTELDFRFAAAFYDADYHEAKSVDSLEEAIDKASYHKGLDIIEVKTNRHENKANHQALWEKIATALKALD</sequence>
<reference key="1">
    <citation type="journal article" date="2001" name="Science">
        <title>Comparative genomics of Listeria species.</title>
        <authorList>
            <person name="Glaser P."/>
            <person name="Frangeul L."/>
            <person name="Buchrieser C."/>
            <person name="Rusniok C."/>
            <person name="Amend A."/>
            <person name="Baquero F."/>
            <person name="Berche P."/>
            <person name="Bloecker H."/>
            <person name="Brandt P."/>
            <person name="Chakraborty T."/>
            <person name="Charbit A."/>
            <person name="Chetouani F."/>
            <person name="Couve E."/>
            <person name="de Daruvar A."/>
            <person name="Dehoux P."/>
            <person name="Domann E."/>
            <person name="Dominguez-Bernal G."/>
            <person name="Duchaud E."/>
            <person name="Durant L."/>
            <person name="Dussurget O."/>
            <person name="Entian K.-D."/>
            <person name="Fsihi H."/>
            <person name="Garcia-del Portillo F."/>
            <person name="Garrido P."/>
            <person name="Gautier L."/>
            <person name="Goebel W."/>
            <person name="Gomez-Lopez N."/>
            <person name="Hain T."/>
            <person name="Hauf J."/>
            <person name="Jackson D."/>
            <person name="Jones L.-M."/>
            <person name="Kaerst U."/>
            <person name="Kreft J."/>
            <person name="Kuhn M."/>
            <person name="Kunst F."/>
            <person name="Kurapkat G."/>
            <person name="Madueno E."/>
            <person name="Maitournam A."/>
            <person name="Mata Vicente J."/>
            <person name="Ng E."/>
            <person name="Nedjari H."/>
            <person name="Nordsiek G."/>
            <person name="Novella S."/>
            <person name="de Pablos B."/>
            <person name="Perez-Diaz J.-C."/>
            <person name="Purcell R."/>
            <person name="Remmel B."/>
            <person name="Rose M."/>
            <person name="Schlueter T."/>
            <person name="Simoes N."/>
            <person name="Tierrez A."/>
            <person name="Vazquez-Boland J.-A."/>
            <person name="Voss H."/>
            <person name="Wehland J."/>
            <person name="Cossart P."/>
        </authorList>
    </citation>
    <scope>NUCLEOTIDE SEQUENCE [LARGE SCALE GENOMIC DNA]</scope>
    <source>
        <strain>ATCC BAA-680 / CLIP 11262</strain>
    </source>
</reference>
<evidence type="ECO:0000255" key="1">
    <source>
        <dbReference type="HAMAP-Rule" id="MF_01659"/>
    </source>
</evidence>